<organism>
    <name type="scientific">Clostridium perfringens (strain ATCC 13124 / DSM 756 / JCM 1290 / NCIMB 6125 / NCTC 8237 / Type A)</name>
    <dbReference type="NCBI Taxonomy" id="195103"/>
    <lineage>
        <taxon>Bacteria</taxon>
        <taxon>Bacillati</taxon>
        <taxon>Bacillota</taxon>
        <taxon>Clostridia</taxon>
        <taxon>Eubacteriales</taxon>
        <taxon>Clostridiaceae</taxon>
        <taxon>Clostridium</taxon>
    </lineage>
</organism>
<evidence type="ECO:0000255" key="1">
    <source>
        <dbReference type="HAMAP-Rule" id="MF_00375"/>
    </source>
</evidence>
<feature type="chain" id="PRO_0000273581" description="Glutamate-1-semialdehyde 2,1-aminomutase">
    <location>
        <begin position="1"/>
        <end position="425"/>
    </location>
</feature>
<feature type="modified residue" description="N6-(pyridoxal phosphate)lysine" evidence="1">
    <location>
        <position position="265"/>
    </location>
</feature>
<keyword id="KW-0963">Cytoplasm</keyword>
<keyword id="KW-0413">Isomerase</keyword>
<keyword id="KW-0627">Porphyrin biosynthesis</keyword>
<keyword id="KW-0663">Pyridoxal phosphate</keyword>
<reference key="1">
    <citation type="journal article" date="1999" name="Microbiol. Immunol.">
        <title>A Clostridium perfringens hem gene cluster contains a cysG(B) homologue that is involved in cobalamin biosynthesis.</title>
        <authorList>
            <person name="Koyama M."/>
            <person name="Katayama S."/>
            <person name="Kaji M."/>
            <person name="Taniguchi Y."/>
            <person name="Matsushita O."/>
            <person name="Minami J."/>
            <person name="Morita S."/>
            <person name="Okabe A."/>
        </authorList>
    </citation>
    <scope>NUCLEOTIDE SEQUENCE [GENOMIC DNA]</scope>
</reference>
<reference key="2">
    <citation type="journal article" date="2006" name="Genome Res.">
        <title>Skewed genomic variability in strains of the toxigenic bacterial pathogen, Clostridium perfringens.</title>
        <authorList>
            <person name="Myers G.S.A."/>
            <person name="Rasko D.A."/>
            <person name="Cheung J.K."/>
            <person name="Ravel J."/>
            <person name="Seshadri R."/>
            <person name="DeBoy R.T."/>
            <person name="Ren Q."/>
            <person name="Varga J."/>
            <person name="Awad M.M."/>
            <person name="Brinkac L.M."/>
            <person name="Daugherty S.C."/>
            <person name="Haft D.H."/>
            <person name="Dodson R.J."/>
            <person name="Madupu R."/>
            <person name="Nelson W.C."/>
            <person name="Rosovitz M.J."/>
            <person name="Sullivan S.A."/>
            <person name="Khouri H."/>
            <person name="Dimitrov G.I."/>
            <person name="Watkins K.L."/>
            <person name="Mulligan S."/>
            <person name="Benton J."/>
            <person name="Radune D."/>
            <person name="Fisher D.J."/>
            <person name="Atkins H.S."/>
            <person name="Hiscox T."/>
            <person name="Jost B.H."/>
            <person name="Billington S.J."/>
            <person name="Songer J.G."/>
            <person name="McClane B.A."/>
            <person name="Titball R.W."/>
            <person name="Rood J.I."/>
            <person name="Melville S.B."/>
            <person name="Paulsen I.T."/>
        </authorList>
    </citation>
    <scope>NUCLEOTIDE SEQUENCE [LARGE SCALE GENOMIC DNA]</scope>
    <source>
        <strain>ATCC 13124 / DSM 756 / JCM 1290 / NCIMB 6125 / NCTC 8237 / S 107 / Type A</strain>
    </source>
</reference>
<sequence length="425" mass="46885">MDRNKEIFEESKKYMPGGVNSPVRSFGSVGINPPVIKSGKGAMIKDENGNEYIDFVLAWGPMILGHCDEDVVKAIKKTSEESIAFGASTKLELDLAKLLCETLDNVDMIRMVNSGTEATMSAVKLARGYTKKDKIIKFAGCYHGHFDGFLIEAGSGVLTEGIPGCLGVPEESIKNTLIGIYNDEKQVEELFEKYGNDIAGIIIEPVAGNMGVVKCDPKFMRKLRELCDKYGALLIFDEVMCGFRVAYKGAQTLFDVKPDLVTYAKIMGGGLPCGAYGGRREIMENLSPLGGVYQAGTMSGNPIVMSAGLATVKKLYENPSYYDHIEKIGSKLEKGVLEIAKKKGLGLVVNRQGGMMTLFFTDLKEVKCYDDVKTCDGERFKRYFLHMLNKGFNIPPSQFEAMFLSVKHTEEHIDKFLEAFESFEG</sequence>
<gene>
    <name evidence="1" type="primary">hemL</name>
    <name type="ordered locus">CPF_1685</name>
</gene>
<dbReference type="EC" id="5.4.3.8" evidence="1"/>
<dbReference type="EMBL" id="AB017186">
    <property type="protein sequence ID" value="BAA74784.1"/>
    <property type="molecule type" value="Genomic_DNA"/>
</dbReference>
<dbReference type="EMBL" id="CP000246">
    <property type="protein sequence ID" value="ABG84031.1"/>
    <property type="molecule type" value="Genomic_DNA"/>
</dbReference>
<dbReference type="PIR" id="T43861">
    <property type="entry name" value="T43861"/>
</dbReference>
<dbReference type="RefSeq" id="WP_003481561.1">
    <property type="nucleotide sequence ID" value="NC_008261.1"/>
</dbReference>
<dbReference type="SMR" id="Q0TQG7"/>
<dbReference type="STRING" id="195103.CPF_1685"/>
<dbReference type="PaxDb" id="195103-CPF_1685"/>
<dbReference type="KEGG" id="cpf:CPF_1685"/>
<dbReference type="eggNOG" id="COG0001">
    <property type="taxonomic scope" value="Bacteria"/>
</dbReference>
<dbReference type="HOGENOM" id="CLU_016922_1_5_9"/>
<dbReference type="UniPathway" id="UPA00251">
    <property type="reaction ID" value="UER00317"/>
</dbReference>
<dbReference type="Proteomes" id="UP000001823">
    <property type="component" value="Chromosome"/>
</dbReference>
<dbReference type="GO" id="GO:0005737">
    <property type="term" value="C:cytoplasm"/>
    <property type="evidence" value="ECO:0007669"/>
    <property type="project" value="UniProtKB-SubCell"/>
</dbReference>
<dbReference type="GO" id="GO:0042286">
    <property type="term" value="F:glutamate-1-semialdehyde 2,1-aminomutase activity"/>
    <property type="evidence" value="ECO:0007669"/>
    <property type="project" value="UniProtKB-UniRule"/>
</dbReference>
<dbReference type="GO" id="GO:0030170">
    <property type="term" value="F:pyridoxal phosphate binding"/>
    <property type="evidence" value="ECO:0007669"/>
    <property type="project" value="InterPro"/>
</dbReference>
<dbReference type="GO" id="GO:0008483">
    <property type="term" value="F:transaminase activity"/>
    <property type="evidence" value="ECO:0007669"/>
    <property type="project" value="InterPro"/>
</dbReference>
<dbReference type="GO" id="GO:0006782">
    <property type="term" value="P:protoporphyrinogen IX biosynthetic process"/>
    <property type="evidence" value="ECO:0007669"/>
    <property type="project" value="UniProtKB-UniRule"/>
</dbReference>
<dbReference type="CDD" id="cd00610">
    <property type="entry name" value="OAT_like"/>
    <property type="match status" value="1"/>
</dbReference>
<dbReference type="FunFam" id="3.40.640.10:FF:000021">
    <property type="entry name" value="Glutamate-1-semialdehyde 2,1-aminomutase"/>
    <property type="match status" value="1"/>
</dbReference>
<dbReference type="Gene3D" id="3.90.1150.10">
    <property type="entry name" value="Aspartate Aminotransferase, domain 1"/>
    <property type="match status" value="1"/>
</dbReference>
<dbReference type="Gene3D" id="3.40.640.10">
    <property type="entry name" value="Type I PLP-dependent aspartate aminotransferase-like (Major domain)"/>
    <property type="match status" value="1"/>
</dbReference>
<dbReference type="HAMAP" id="MF_00375">
    <property type="entry name" value="HemL_aminotrans_3"/>
    <property type="match status" value="1"/>
</dbReference>
<dbReference type="InterPro" id="IPR004639">
    <property type="entry name" value="4pyrrol_synth_GluAld_NH2Trfase"/>
</dbReference>
<dbReference type="InterPro" id="IPR005814">
    <property type="entry name" value="Aminotrans_3"/>
</dbReference>
<dbReference type="InterPro" id="IPR049704">
    <property type="entry name" value="Aminotrans_3_PPA_site"/>
</dbReference>
<dbReference type="InterPro" id="IPR015424">
    <property type="entry name" value="PyrdxlP-dep_Trfase"/>
</dbReference>
<dbReference type="InterPro" id="IPR015421">
    <property type="entry name" value="PyrdxlP-dep_Trfase_major"/>
</dbReference>
<dbReference type="InterPro" id="IPR015422">
    <property type="entry name" value="PyrdxlP-dep_Trfase_small"/>
</dbReference>
<dbReference type="NCBIfam" id="TIGR00713">
    <property type="entry name" value="hemL"/>
    <property type="match status" value="1"/>
</dbReference>
<dbReference type="NCBIfam" id="NF000818">
    <property type="entry name" value="PRK00062.1"/>
    <property type="match status" value="1"/>
</dbReference>
<dbReference type="PANTHER" id="PTHR43713">
    <property type="entry name" value="GLUTAMATE-1-SEMIALDEHYDE 2,1-AMINOMUTASE"/>
    <property type="match status" value="1"/>
</dbReference>
<dbReference type="PANTHER" id="PTHR43713:SF3">
    <property type="entry name" value="GLUTAMATE-1-SEMIALDEHYDE 2,1-AMINOMUTASE 1, CHLOROPLASTIC-RELATED"/>
    <property type="match status" value="1"/>
</dbReference>
<dbReference type="Pfam" id="PF00202">
    <property type="entry name" value="Aminotran_3"/>
    <property type="match status" value="1"/>
</dbReference>
<dbReference type="SUPFAM" id="SSF53383">
    <property type="entry name" value="PLP-dependent transferases"/>
    <property type="match status" value="1"/>
</dbReference>
<dbReference type="PROSITE" id="PS00600">
    <property type="entry name" value="AA_TRANSFER_CLASS_3"/>
    <property type="match status" value="1"/>
</dbReference>
<accession>Q0TQG7</accession>
<accession>Q9ZNC8</accession>
<comment type="catalytic activity">
    <reaction evidence="1">
        <text>(S)-4-amino-5-oxopentanoate = 5-aminolevulinate</text>
        <dbReference type="Rhea" id="RHEA:14265"/>
        <dbReference type="ChEBI" id="CHEBI:57501"/>
        <dbReference type="ChEBI" id="CHEBI:356416"/>
        <dbReference type="EC" id="5.4.3.8"/>
    </reaction>
</comment>
<comment type="cofactor">
    <cofactor evidence="1">
        <name>pyridoxal 5'-phosphate</name>
        <dbReference type="ChEBI" id="CHEBI:597326"/>
    </cofactor>
</comment>
<comment type="pathway">
    <text evidence="1">Porphyrin-containing compound metabolism; protoporphyrin-IX biosynthesis; 5-aminolevulinate from L-glutamyl-tRNA(Glu): step 2/2.</text>
</comment>
<comment type="subunit">
    <text evidence="1">Homodimer.</text>
</comment>
<comment type="subcellular location">
    <subcellularLocation>
        <location evidence="1">Cytoplasm</location>
    </subcellularLocation>
</comment>
<comment type="similarity">
    <text evidence="1">Belongs to the class-III pyridoxal-phosphate-dependent aminotransferase family. HemL subfamily.</text>
</comment>
<name>GSA_CLOP1</name>
<protein>
    <recommendedName>
        <fullName evidence="1">Glutamate-1-semialdehyde 2,1-aminomutase</fullName>
        <shortName evidence="1">GSA</shortName>
        <ecNumber evidence="1">5.4.3.8</ecNumber>
    </recommendedName>
    <alternativeName>
        <fullName evidence="1">Glutamate-1-semialdehyde aminotransferase</fullName>
        <shortName evidence="1">GSA-AT</shortName>
    </alternativeName>
</protein>
<proteinExistence type="inferred from homology"/>